<protein>
    <recommendedName>
        <fullName>Inter-alpha-trypsin inhibitor</fullName>
        <shortName>ITI</shortName>
    </recommendedName>
    <alternativeName>
        <fullName>Inhibitory fragment of ITI</fullName>
    </alternativeName>
</protein>
<accession>P62757</accession>
<accession>P13371</accession>
<keyword id="KW-0903">Direct protein sequencing</keyword>
<keyword id="KW-1015">Disulfide bond</keyword>
<keyword id="KW-0325">Glycoprotein</keyword>
<keyword id="KW-0646">Protease inhibitor</keyword>
<keyword id="KW-1185">Reference proteome</keyword>
<keyword id="KW-0677">Repeat</keyword>
<keyword id="KW-0722">Serine protease inhibitor</keyword>
<proteinExistence type="evidence at protein level"/>
<name>IATR_SHEEP</name>
<dbReference type="PIR" id="A29652">
    <property type="entry name" value="A29652"/>
</dbReference>
<dbReference type="SMR" id="P62757"/>
<dbReference type="STRING" id="9940.ENSOARP00000006566"/>
<dbReference type="PaxDb" id="9940-ENSOARP00000006566"/>
<dbReference type="eggNOG" id="KOG4295">
    <property type="taxonomic scope" value="Eukaryota"/>
</dbReference>
<dbReference type="Proteomes" id="UP000002356">
    <property type="component" value="Unplaced"/>
</dbReference>
<dbReference type="GO" id="GO:0004867">
    <property type="term" value="F:serine-type endopeptidase inhibitor activity"/>
    <property type="evidence" value="ECO:0007669"/>
    <property type="project" value="UniProtKB-KW"/>
</dbReference>
<dbReference type="CDD" id="cd22597">
    <property type="entry name" value="Kunitz_bikunin_2-like"/>
    <property type="match status" value="1"/>
</dbReference>
<dbReference type="FunFam" id="4.10.410.10:FF:000005">
    <property type="entry name" value="Pancreatic trypsin inhibitor"/>
    <property type="match status" value="1"/>
</dbReference>
<dbReference type="Gene3D" id="4.10.410.10">
    <property type="entry name" value="Pancreatic trypsin inhibitor Kunitz domain"/>
    <property type="match status" value="2"/>
</dbReference>
<dbReference type="InterPro" id="IPR029856">
    <property type="entry name" value="AMBP"/>
</dbReference>
<dbReference type="InterPro" id="IPR002223">
    <property type="entry name" value="Kunitz_BPTI"/>
</dbReference>
<dbReference type="InterPro" id="IPR036880">
    <property type="entry name" value="Kunitz_BPTI_sf"/>
</dbReference>
<dbReference type="InterPro" id="IPR020901">
    <property type="entry name" value="Prtase_inh_Kunz-CS"/>
</dbReference>
<dbReference type="PANTHER" id="PTHR46676">
    <property type="entry name" value="PROTEIN AMBP"/>
    <property type="match status" value="1"/>
</dbReference>
<dbReference type="PANTHER" id="PTHR46676:SF1">
    <property type="entry name" value="PROTEIN AMBP"/>
    <property type="match status" value="1"/>
</dbReference>
<dbReference type="Pfam" id="PF00014">
    <property type="entry name" value="Kunitz_BPTI"/>
    <property type="match status" value="2"/>
</dbReference>
<dbReference type="PRINTS" id="PR00759">
    <property type="entry name" value="BASICPTASE"/>
</dbReference>
<dbReference type="SMART" id="SM00131">
    <property type="entry name" value="KU"/>
    <property type="match status" value="2"/>
</dbReference>
<dbReference type="SUPFAM" id="SSF57362">
    <property type="entry name" value="BPTI-like"/>
    <property type="match status" value="2"/>
</dbReference>
<dbReference type="PROSITE" id="PS00280">
    <property type="entry name" value="BPTI_KUNITZ_1"/>
    <property type="match status" value="2"/>
</dbReference>
<dbReference type="PROSITE" id="PS50279">
    <property type="entry name" value="BPTI_KUNITZ_2"/>
    <property type="match status" value="2"/>
</dbReference>
<feature type="chain" id="PRO_0000155406" description="Inter-alpha-trypsin inhibitor">
    <location>
        <begin position="1" status="less than"/>
        <end position="123" status="greater than"/>
    </location>
</feature>
<feature type="domain" description="BPTI/Kunitz inhibitor 1" evidence="1">
    <location>
        <begin position="5"/>
        <end position="55"/>
    </location>
</feature>
<feature type="domain" description="BPTI/Kunitz inhibitor 2" evidence="1">
    <location>
        <begin position="61"/>
        <end position="111"/>
    </location>
</feature>
<feature type="site" description="Reactive bond for chymotrypsin and elastase">
    <location>
        <begin position="15"/>
        <end position="16"/>
    </location>
</feature>
<feature type="site" description="Reactive bond for trypsin">
    <location>
        <begin position="71"/>
        <end position="72"/>
    </location>
</feature>
<feature type="glycosylation site" description="N-linked (GlcNAc...) asparagine">
    <location>
        <position position="24"/>
    </location>
</feature>
<feature type="disulfide bond" evidence="1">
    <location>
        <begin position="5"/>
        <end position="55"/>
    </location>
</feature>
<feature type="disulfide bond" evidence="1">
    <location>
        <begin position="14"/>
        <end position="38"/>
    </location>
</feature>
<feature type="disulfide bond" evidence="1">
    <location>
        <begin position="30"/>
        <end position="51"/>
    </location>
</feature>
<feature type="disulfide bond" evidence="1">
    <location>
        <begin position="61"/>
        <end position="111"/>
    </location>
</feature>
<feature type="disulfide bond" evidence="1">
    <location>
        <begin position="70"/>
        <end position="94"/>
    </location>
</feature>
<feature type="disulfide bond" evidence="1">
    <location>
        <begin position="86"/>
        <end position="107"/>
    </location>
</feature>
<feature type="non-terminal residue">
    <location>
        <position position="1"/>
    </location>
</feature>
<feature type="non-terminal residue">
    <location>
        <position position="123"/>
    </location>
</feature>
<comment type="function">
    <text>This inhibitory fragment, released from native ITI after limited proteolysis with trypsin, contains two homologous domains. Whereas the second domain is a strong inhibitor of trypsin, the first domain interacts weakly with PMN-granulocytic elastase and not at all with pancreatic elastase.</text>
</comment>
<comment type="miscellaneous">
    <text>The amino acid at position p2' (17) appears to determine the specificity of the inhibition of domain I. Inhibitors with methionine in this position interact weakly with chymotrypsin and elastase; those with leucine interact strongly.</text>
</comment>
<evidence type="ECO:0000255" key="1">
    <source>
        <dbReference type="PROSITE-ProRule" id="PRU00031"/>
    </source>
</evidence>
<reference key="1">
    <citation type="journal article" date="1987" name="Biol. Chem. Hoppe-Seyler">
        <title>The amino-acid sequence of the trypsin-released inhibitor from sheep inter-alpha-trypsin inhibitor.</title>
        <authorList>
            <person name="Rasp G."/>
            <person name="Hochstrasser K."/>
            <person name="Wachter E."/>
            <person name="Reisinger P.W.M."/>
        </authorList>
    </citation>
    <scope>PROTEIN SEQUENCE</scope>
</reference>
<sequence length="123" mass="13687">KEDSCQLGYSQGPCLGMFKRYFYNGTSMACETFYYGGCMGNGNNFPSEKECLQTCRTVQACNLPIVRGPCRAGIELWAFDAVKGKCVRFIYGGCNGNGNQFYSQKECKEYCGIPGEADEELLR</sequence>
<organism>
    <name type="scientific">Ovis aries</name>
    <name type="common">Sheep</name>
    <dbReference type="NCBI Taxonomy" id="9940"/>
    <lineage>
        <taxon>Eukaryota</taxon>
        <taxon>Metazoa</taxon>
        <taxon>Chordata</taxon>
        <taxon>Craniata</taxon>
        <taxon>Vertebrata</taxon>
        <taxon>Euteleostomi</taxon>
        <taxon>Mammalia</taxon>
        <taxon>Eutheria</taxon>
        <taxon>Laurasiatheria</taxon>
        <taxon>Artiodactyla</taxon>
        <taxon>Ruminantia</taxon>
        <taxon>Pecora</taxon>
        <taxon>Bovidae</taxon>
        <taxon>Caprinae</taxon>
        <taxon>Ovis</taxon>
    </lineage>
</organism>